<feature type="chain" id="PRO_1000140251" description="Type III pantothenate kinase">
    <location>
        <begin position="1"/>
        <end position="257"/>
    </location>
</feature>
<feature type="active site" description="Proton acceptor" evidence="1">
    <location>
        <position position="109"/>
    </location>
</feature>
<feature type="binding site" evidence="1">
    <location>
        <begin position="6"/>
        <end position="13"/>
    </location>
    <ligand>
        <name>ATP</name>
        <dbReference type="ChEBI" id="CHEBI:30616"/>
    </ligand>
</feature>
<feature type="binding site" evidence="1">
    <location>
        <begin position="107"/>
        <end position="110"/>
    </location>
    <ligand>
        <name>substrate</name>
    </ligand>
</feature>
<feature type="binding site" evidence="1">
    <location>
        <position position="129"/>
    </location>
    <ligand>
        <name>K(+)</name>
        <dbReference type="ChEBI" id="CHEBI:29103"/>
    </ligand>
</feature>
<feature type="binding site" evidence="1">
    <location>
        <position position="132"/>
    </location>
    <ligand>
        <name>ATP</name>
        <dbReference type="ChEBI" id="CHEBI:30616"/>
    </ligand>
</feature>
<feature type="binding site" evidence="1">
    <location>
        <position position="184"/>
    </location>
    <ligand>
        <name>substrate</name>
    </ligand>
</feature>
<accession>B4RC03</accession>
<dbReference type="EC" id="2.7.1.33" evidence="1"/>
<dbReference type="EMBL" id="CP000747">
    <property type="protein sequence ID" value="ACG78200.1"/>
    <property type="molecule type" value="Genomic_DNA"/>
</dbReference>
<dbReference type="RefSeq" id="WP_012522342.1">
    <property type="nucleotide sequence ID" value="NC_011144.1"/>
</dbReference>
<dbReference type="SMR" id="B4RC03"/>
<dbReference type="STRING" id="450851.PHZ_c1789"/>
<dbReference type="KEGG" id="pzu:PHZ_c1789"/>
<dbReference type="eggNOG" id="COG1521">
    <property type="taxonomic scope" value="Bacteria"/>
</dbReference>
<dbReference type="HOGENOM" id="CLU_066627_1_0_5"/>
<dbReference type="OrthoDB" id="9804707at2"/>
<dbReference type="UniPathway" id="UPA00241">
    <property type="reaction ID" value="UER00352"/>
</dbReference>
<dbReference type="Proteomes" id="UP000001868">
    <property type="component" value="Chromosome"/>
</dbReference>
<dbReference type="GO" id="GO:0005737">
    <property type="term" value="C:cytoplasm"/>
    <property type="evidence" value="ECO:0007669"/>
    <property type="project" value="UniProtKB-SubCell"/>
</dbReference>
<dbReference type="GO" id="GO:0005524">
    <property type="term" value="F:ATP binding"/>
    <property type="evidence" value="ECO:0007669"/>
    <property type="project" value="UniProtKB-UniRule"/>
</dbReference>
<dbReference type="GO" id="GO:0046872">
    <property type="term" value="F:metal ion binding"/>
    <property type="evidence" value="ECO:0007669"/>
    <property type="project" value="UniProtKB-KW"/>
</dbReference>
<dbReference type="GO" id="GO:0004594">
    <property type="term" value="F:pantothenate kinase activity"/>
    <property type="evidence" value="ECO:0007669"/>
    <property type="project" value="UniProtKB-UniRule"/>
</dbReference>
<dbReference type="GO" id="GO:0015937">
    <property type="term" value="P:coenzyme A biosynthetic process"/>
    <property type="evidence" value="ECO:0007669"/>
    <property type="project" value="UniProtKB-UniRule"/>
</dbReference>
<dbReference type="CDD" id="cd24015">
    <property type="entry name" value="ASKHA_NBD_PanK-III"/>
    <property type="match status" value="1"/>
</dbReference>
<dbReference type="Gene3D" id="3.30.420.40">
    <property type="match status" value="2"/>
</dbReference>
<dbReference type="HAMAP" id="MF_01274">
    <property type="entry name" value="Pantothen_kinase_3"/>
    <property type="match status" value="1"/>
</dbReference>
<dbReference type="InterPro" id="IPR043129">
    <property type="entry name" value="ATPase_NBD"/>
</dbReference>
<dbReference type="InterPro" id="IPR004619">
    <property type="entry name" value="Type_III_PanK"/>
</dbReference>
<dbReference type="NCBIfam" id="TIGR00671">
    <property type="entry name" value="baf"/>
    <property type="match status" value="1"/>
</dbReference>
<dbReference type="NCBIfam" id="NF009844">
    <property type="entry name" value="PRK13318.1-2"/>
    <property type="match status" value="1"/>
</dbReference>
<dbReference type="NCBIfam" id="NF009848">
    <property type="entry name" value="PRK13318.1-6"/>
    <property type="match status" value="1"/>
</dbReference>
<dbReference type="NCBIfam" id="NF009855">
    <property type="entry name" value="PRK13321.1"/>
    <property type="match status" value="1"/>
</dbReference>
<dbReference type="PANTHER" id="PTHR34265">
    <property type="entry name" value="TYPE III PANTOTHENATE KINASE"/>
    <property type="match status" value="1"/>
</dbReference>
<dbReference type="PANTHER" id="PTHR34265:SF1">
    <property type="entry name" value="TYPE III PANTOTHENATE KINASE"/>
    <property type="match status" value="1"/>
</dbReference>
<dbReference type="Pfam" id="PF03309">
    <property type="entry name" value="Pan_kinase"/>
    <property type="match status" value="1"/>
</dbReference>
<dbReference type="SUPFAM" id="SSF53067">
    <property type="entry name" value="Actin-like ATPase domain"/>
    <property type="match status" value="2"/>
</dbReference>
<protein>
    <recommendedName>
        <fullName evidence="1">Type III pantothenate kinase</fullName>
        <ecNumber evidence="1">2.7.1.33</ecNumber>
    </recommendedName>
    <alternativeName>
        <fullName evidence="1">PanK-III</fullName>
    </alternativeName>
    <alternativeName>
        <fullName evidence="1">Pantothenic acid kinase</fullName>
    </alternativeName>
</protein>
<evidence type="ECO:0000255" key="1">
    <source>
        <dbReference type="HAMAP-Rule" id="MF_01274"/>
    </source>
</evidence>
<name>COAX_PHEZH</name>
<gene>
    <name evidence="1" type="primary">coaX</name>
    <name type="ordered locus">PHZ_c1789</name>
</gene>
<reference key="1">
    <citation type="journal article" date="2008" name="BMC Genomics">
        <title>Complete genome of Phenylobacterium zucineum - a novel facultative intracellular bacterium isolated from human erythroleukemia cell line K562.</title>
        <authorList>
            <person name="Luo Y."/>
            <person name="Xu X."/>
            <person name="Ding Z."/>
            <person name="Liu Z."/>
            <person name="Zhang B."/>
            <person name="Yan Z."/>
            <person name="Sun J."/>
            <person name="Hu S."/>
            <person name="Hu X."/>
        </authorList>
    </citation>
    <scope>NUCLEOTIDE SEQUENCE [LARGE SCALE GENOMIC DNA]</scope>
    <source>
        <strain>HLK1</strain>
    </source>
</reference>
<keyword id="KW-0067">ATP-binding</keyword>
<keyword id="KW-0173">Coenzyme A biosynthesis</keyword>
<keyword id="KW-0963">Cytoplasm</keyword>
<keyword id="KW-0418">Kinase</keyword>
<keyword id="KW-0479">Metal-binding</keyword>
<keyword id="KW-0547">Nucleotide-binding</keyword>
<keyword id="KW-0630">Potassium</keyword>
<keyword id="KW-1185">Reference proteome</keyword>
<keyword id="KW-0808">Transferase</keyword>
<organism>
    <name type="scientific">Phenylobacterium zucineum (strain HLK1)</name>
    <dbReference type="NCBI Taxonomy" id="450851"/>
    <lineage>
        <taxon>Bacteria</taxon>
        <taxon>Pseudomonadati</taxon>
        <taxon>Pseudomonadota</taxon>
        <taxon>Alphaproteobacteria</taxon>
        <taxon>Caulobacterales</taxon>
        <taxon>Caulobacteraceae</taxon>
        <taxon>Phenylobacterium</taxon>
    </lineage>
</organism>
<sequence>MLLAIEQGNTNTLFAVHDGERWIAQWRAATDSTRTADEYAVWLSQLLSMAGLALGAFDGCIISSVVPQSIFNLRNLSRRYLHVEPLVIGENAELGIPIRIDKPSEAGADRLVNAIGAHIAYPGPLIVIDSGTATTFDVIAADGGFEGGVIAPGINLSMEALHTAAAKLPRVAIQKPQKVVGTDTVGAMQAGVFWGYIALIEGLIARIKAERDEPLTVVATGGVASLFHGATAAIDKFDPDLTIRGMLEIWRRNQAKA</sequence>
<comment type="function">
    <text evidence="1">Catalyzes the phosphorylation of pantothenate (Pan), the first step in CoA biosynthesis.</text>
</comment>
<comment type="catalytic activity">
    <reaction evidence="1">
        <text>(R)-pantothenate + ATP = (R)-4'-phosphopantothenate + ADP + H(+)</text>
        <dbReference type="Rhea" id="RHEA:16373"/>
        <dbReference type="ChEBI" id="CHEBI:10986"/>
        <dbReference type="ChEBI" id="CHEBI:15378"/>
        <dbReference type="ChEBI" id="CHEBI:29032"/>
        <dbReference type="ChEBI" id="CHEBI:30616"/>
        <dbReference type="ChEBI" id="CHEBI:456216"/>
        <dbReference type="EC" id="2.7.1.33"/>
    </reaction>
</comment>
<comment type="cofactor">
    <cofactor evidence="1">
        <name>NH4(+)</name>
        <dbReference type="ChEBI" id="CHEBI:28938"/>
    </cofactor>
    <cofactor evidence="1">
        <name>K(+)</name>
        <dbReference type="ChEBI" id="CHEBI:29103"/>
    </cofactor>
    <text evidence="1">A monovalent cation. Ammonium or potassium.</text>
</comment>
<comment type="pathway">
    <text evidence="1">Cofactor biosynthesis; coenzyme A biosynthesis; CoA from (R)-pantothenate: step 1/5.</text>
</comment>
<comment type="subunit">
    <text evidence="1">Homodimer.</text>
</comment>
<comment type="subcellular location">
    <subcellularLocation>
        <location evidence="1">Cytoplasm</location>
    </subcellularLocation>
</comment>
<comment type="similarity">
    <text evidence="1">Belongs to the type III pantothenate kinase family.</text>
</comment>
<proteinExistence type="inferred from homology"/>